<feature type="chain" id="PRO_0000347855" description="Alanine--tRNA ligase">
    <location>
        <begin position="1"/>
        <end position="874"/>
    </location>
</feature>
<feature type="binding site" evidence="1">
    <location>
        <position position="561"/>
    </location>
    <ligand>
        <name>Zn(2+)</name>
        <dbReference type="ChEBI" id="CHEBI:29105"/>
    </ligand>
</feature>
<feature type="binding site" evidence="1">
    <location>
        <position position="565"/>
    </location>
    <ligand>
        <name>Zn(2+)</name>
        <dbReference type="ChEBI" id="CHEBI:29105"/>
    </ligand>
</feature>
<feature type="binding site" evidence="1">
    <location>
        <position position="663"/>
    </location>
    <ligand>
        <name>Zn(2+)</name>
        <dbReference type="ChEBI" id="CHEBI:29105"/>
    </ligand>
</feature>
<feature type="binding site" evidence="1">
    <location>
        <position position="667"/>
    </location>
    <ligand>
        <name>Zn(2+)</name>
        <dbReference type="ChEBI" id="CHEBI:29105"/>
    </ligand>
</feature>
<organism>
    <name type="scientific">Trichodesmium erythraeum (strain IMS101)</name>
    <dbReference type="NCBI Taxonomy" id="203124"/>
    <lineage>
        <taxon>Bacteria</taxon>
        <taxon>Bacillati</taxon>
        <taxon>Cyanobacteriota</taxon>
        <taxon>Cyanophyceae</taxon>
        <taxon>Oscillatoriophycideae</taxon>
        <taxon>Oscillatoriales</taxon>
        <taxon>Microcoleaceae</taxon>
        <taxon>Trichodesmium</taxon>
    </lineage>
</organism>
<name>SYA_TRIEI</name>
<reference key="1">
    <citation type="journal article" date="2015" name="Proc. Natl. Acad. Sci. U.S.A.">
        <title>Trichodesmium genome maintains abundant, widespread noncoding DNA in situ, despite oligotrophic lifestyle.</title>
        <authorList>
            <person name="Walworth N."/>
            <person name="Pfreundt U."/>
            <person name="Nelson W.C."/>
            <person name="Mincer T."/>
            <person name="Heidelberg J.F."/>
            <person name="Fu F."/>
            <person name="Waterbury J.B."/>
            <person name="Glavina del Rio T."/>
            <person name="Goodwin L."/>
            <person name="Kyrpides N.C."/>
            <person name="Land M.L."/>
            <person name="Woyke T."/>
            <person name="Hutchins D.A."/>
            <person name="Hess W.R."/>
            <person name="Webb E.A."/>
        </authorList>
    </citation>
    <scope>NUCLEOTIDE SEQUENCE [LARGE SCALE GENOMIC DNA]</scope>
    <source>
        <strain>IMS101</strain>
    </source>
</reference>
<dbReference type="EC" id="6.1.1.7" evidence="1"/>
<dbReference type="EMBL" id="CP000393">
    <property type="protein sequence ID" value="ABG53756.1"/>
    <property type="molecule type" value="Genomic_DNA"/>
</dbReference>
<dbReference type="RefSeq" id="WP_011614070.1">
    <property type="nucleotide sequence ID" value="NC_008312.1"/>
</dbReference>
<dbReference type="SMR" id="Q10VG8"/>
<dbReference type="STRING" id="203124.Tery_4806"/>
<dbReference type="KEGG" id="ter:Tery_4806"/>
<dbReference type="eggNOG" id="COG0013">
    <property type="taxonomic scope" value="Bacteria"/>
</dbReference>
<dbReference type="HOGENOM" id="CLU_004485_1_1_3"/>
<dbReference type="OrthoDB" id="9803884at2"/>
<dbReference type="GO" id="GO:0005829">
    <property type="term" value="C:cytosol"/>
    <property type="evidence" value="ECO:0007669"/>
    <property type="project" value="TreeGrafter"/>
</dbReference>
<dbReference type="GO" id="GO:0004813">
    <property type="term" value="F:alanine-tRNA ligase activity"/>
    <property type="evidence" value="ECO:0007669"/>
    <property type="project" value="UniProtKB-UniRule"/>
</dbReference>
<dbReference type="GO" id="GO:0002161">
    <property type="term" value="F:aminoacyl-tRNA deacylase activity"/>
    <property type="evidence" value="ECO:0007669"/>
    <property type="project" value="TreeGrafter"/>
</dbReference>
<dbReference type="GO" id="GO:0005524">
    <property type="term" value="F:ATP binding"/>
    <property type="evidence" value="ECO:0007669"/>
    <property type="project" value="UniProtKB-UniRule"/>
</dbReference>
<dbReference type="GO" id="GO:0000049">
    <property type="term" value="F:tRNA binding"/>
    <property type="evidence" value="ECO:0007669"/>
    <property type="project" value="UniProtKB-KW"/>
</dbReference>
<dbReference type="GO" id="GO:0008270">
    <property type="term" value="F:zinc ion binding"/>
    <property type="evidence" value="ECO:0007669"/>
    <property type="project" value="UniProtKB-UniRule"/>
</dbReference>
<dbReference type="GO" id="GO:0006419">
    <property type="term" value="P:alanyl-tRNA aminoacylation"/>
    <property type="evidence" value="ECO:0007669"/>
    <property type="project" value="UniProtKB-UniRule"/>
</dbReference>
<dbReference type="CDD" id="cd00673">
    <property type="entry name" value="AlaRS_core"/>
    <property type="match status" value="1"/>
</dbReference>
<dbReference type="FunFam" id="2.40.30.130:FF:000001">
    <property type="entry name" value="Alanine--tRNA ligase"/>
    <property type="match status" value="1"/>
</dbReference>
<dbReference type="FunFam" id="3.10.310.40:FF:000001">
    <property type="entry name" value="Alanine--tRNA ligase"/>
    <property type="match status" value="1"/>
</dbReference>
<dbReference type="FunFam" id="3.30.54.20:FF:000001">
    <property type="entry name" value="Alanine--tRNA ligase"/>
    <property type="match status" value="1"/>
</dbReference>
<dbReference type="FunFam" id="3.30.930.10:FF:000004">
    <property type="entry name" value="Alanine--tRNA ligase"/>
    <property type="match status" value="1"/>
</dbReference>
<dbReference type="FunFam" id="3.30.980.10:FF:000004">
    <property type="entry name" value="Alanine--tRNA ligase, cytoplasmic"/>
    <property type="match status" value="1"/>
</dbReference>
<dbReference type="Gene3D" id="2.40.30.130">
    <property type="match status" value="1"/>
</dbReference>
<dbReference type="Gene3D" id="3.10.310.40">
    <property type="match status" value="1"/>
</dbReference>
<dbReference type="Gene3D" id="3.30.54.20">
    <property type="match status" value="1"/>
</dbReference>
<dbReference type="Gene3D" id="6.10.250.550">
    <property type="match status" value="1"/>
</dbReference>
<dbReference type="Gene3D" id="3.30.930.10">
    <property type="entry name" value="Bira Bifunctional Protein, Domain 2"/>
    <property type="match status" value="1"/>
</dbReference>
<dbReference type="Gene3D" id="3.30.980.10">
    <property type="entry name" value="Threonyl-trna Synthetase, Chain A, domain 2"/>
    <property type="match status" value="1"/>
</dbReference>
<dbReference type="HAMAP" id="MF_00036_B">
    <property type="entry name" value="Ala_tRNA_synth_B"/>
    <property type="match status" value="1"/>
</dbReference>
<dbReference type="InterPro" id="IPR045864">
    <property type="entry name" value="aa-tRNA-synth_II/BPL/LPL"/>
</dbReference>
<dbReference type="InterPro" id="IPR002318">
    <property type="entry name" value="Ala-tRNA-lgiase_IIc"/>
</dbReference>
<dbReference type="InterPro" id="IPR018162">
    <property type="entry name" value="Ala-tRNA-ligase_IIc_anticod-bd"/>
</dbReference>
<dbReference type="InterPro" id="IPR018165">
    <property type="entry name" value="Ala-tRNA-synth_IIc_core"/>
</dbReference>
<dbReference type="InterPro" id="IPR018164">
    <property type="entry name" value="Ala-tRNA-synth_IIc_N"/>
</dbReference>
<dbReference type="InterPro" id="IPR050058">
    <property type="entry name" value="Ala-tRNA_ligase"/>
</dbReference>
<dbReference type="InterPro" id="IPR023033">
    <property type="entry name" value="Ala_tRNA_ligase_euk/bac"/>
</dbReference>
<dbReference type="InterPro" id="IPR003156">
    <property type="entry name" value="DHHA1_dom"/>
</dbReference>
<dbReference type="InterPro" id="IPR018163">
    <property type="entry name" value="Thr/Ala-tRNA-synth_IIc_edit"/>
</dbReference>
<dbReference type="InterPro" id="IPR009000">
    <property type="entry name" value="Transl_B-barrel_sf"/>
</dbReference>
<dbReference type="InterPro" id="IPR012947">
    <property type="entry name" value="tRNA_SAD"/>
</dbReference>
<dbReference type="NCBIfam" id="TIGR00344">
    <property type="entry name" value="alaS"/>
    <property type="match status" value="1"/>
</dbReference>
<dbReference type="PANTHER" id="PTHR11777:SF9">
    <property type="entry name" value="ALANINE--TRNA LIGASE, CYTOPLASMIC"/>
    <property type="match status" value="1"/>
</dbReference>
<dbReference type="PANTHER" id="PTHR11777">
    <property type="entry name" value="ALANYL-TRNA SYNTHETASE"/>
    <property type="match status" value="1"/>
</dbReference>
<dbReference type="Pfam" id="PF02272">
    <property type="entry name" value="DHHA1"/>
    <property type="match status" value="1"/>
</dbReference>
<dbReference type="Pfam" id="PF01411">
    <property type="entry name" value="tRNA-synt_2c"/>
    <property type="match status" value="1"/>
</dbReference>
<dbReference type="Pfam" id="PF07973">
    <property type="entry name" value="tRNA_SAD"/>
    <property type="match status" value="1"/>
</dbReference>
<dbReference type="PRINTS" id="PR00980">
    <property type="entry name" value="TRNASYNTHALA"/>
</dbReference>
<dbReference type="SMART" id="SM00863">
    <property type="entry name" value="tRNA_SAD"/>
    <property type="match status" value="1"/>
</dbReference>
<dbReference type="SUPFAM" id="SSF55681">
    <property type="entry name" value="Class II aaRS and biotin synthetases"/>
    <property type="match status" value="1"/>
</dbReference>
<dbReference type="SUPFAM" id="SSF101353">
    <property type="entry name" value="Putative anticodon-binding domain of alanyl-tRNA synthetase (AlaRS)"/>
    <property type="match status" value="1"/>
</dbReference>
<dbReference type="SUPFAM" id="SSF55186">
    <property type="entry name" value="ThrRS/AlaRS common domain"/>
    <property type="match status" value="1"/>
</dbReference>
<dbReference type="SUPFAM" id="SSF50447">
    <property type="entry name" value="Translation proteins"/>
    <property type="match status" value="1"/>
</dbReference>
<dbReference type="PROSITE" id="PS50860">
    <property type="entry name" value="AA_TRNA_LIGASE_II_ALA"/>
    <property type="match status" value="1"/>
</dbReference>
<keyword id="KW-0030">Aminoacyl-tRNA synthetase</keyword>
<keyword id="KW-0067">ATP-binding</keyword>
<keyword id="KW-0963">Cytoplasm</keyword>
<keyword id="KW-0436">Ligase</keyword>
<keyword id="KW-0479">Metal-binding</keyword>
<keyword id="KW-0547">Nucleotide-binding</keyword>
<keyword id="KW-0648">Protein biosynthesis</keyword>
<keyword id="KW-0694">RNA-binding</keyword>
<keyword id="KW-0820">tRNA-binding</keyword>
<keyword id="KW-0862">Zinc</keyword>
<comment type="function">
    <text evidence="1">Catalyzes the attachment of alanine to tRNA(Ala) in a two-step reaction: alanine is first activated by ATP to form Ala-AMP and then transferred to the acceptor end of tRNA(Ala). Also edits incorrectly charged Ser-tRNA(Ala) and Gly-tRNA(Ala) via its editing domain.</text>
</comment>
<comment type="catalytic activity">
    <reaction evidence="1">
        <text>tRNA(Ala) + L-alanine + ATP = L-alanyl-tRNA(Ala) + AMP + diphosphate</text>
        <dbReference type="Rhea" id="RHEA:12540"/>
        <dbReference type="Rhea" id="RHEA-COMP:9657"/>
        <dbReference type="Rhea" id="RHEA-COMP:9923"/>
        <dbReference type="ChEBI" id="CHEBI:30616"/>
        <dbReference type="ChEBI" id="CHEBI:33019"/>
        <dbReference type="ChEBI" id="CHEBI:57972"/>
        <dbReference type="ChEBI" id="CHEBI:78442"/>
        <dbReference type="ChEBI" id="CHEBI:78497"/>
        <dbReference type="ChEBI" id="CHEBI:456215"/>
        <dbReference type="EC" id="6.1.1.7"/>
    </reaction>
</comment>
<comment type="cofactor">
    <cofactor evidence="1">
        <name>Zn(2+)</name>
        <dbReference type="ChEBI" id="CHEBI:29105"/>
    </cofactor>
    <text evidence="1">Binds 1 zinc ion per subunit.</text>
</comment>
<comment type="subcellular location">
    <subcellularLocation>
        <location evidence="1">Cytoplasm</location>
    </subcellularLocation>
</comment>
<comment type="domain">
    <text evidence="1">Consists of three domains; the N-terminal catalytic domain, the editing domain and the C-terminal C-Ala domain. The editing domain removes incorrectly charged amino acids, while the C-Ala domain, along with tRNA(Ala), serves as a bridge to cooperatively bring together the editing and aminoacylation centers thus stimulating deacylation of misacylated tRNAs.</text>
</comment>
<comment type="similarity">
    <text evidence="1">Belongs to the class-II aminoacyl-tRNA synthetase family.</text>
</comment>
<proteinExistence type="inferred from homology"/>
<protein>
    <recommendedName>
        <fullName evidence="1">Alanine--tRNA ligase</fullName>
        <ecNumber evidence="1">6.1.1.7</ecNumber>
    </recommendedName>
    <alternativeName>
        <fullName evidence="1">Alanyl-tRNA synthetase</fullName>
        <shortName evidence="1">AlaRS</shortName>
    </alternativeName>
</protein>
<accession>Q10VG8</accession>
<evidence type="ECO:0000255" key="1">
    <source>
        <dbReference type="HAMAP-Rule" id="MF_00036"/>
    </source>
</evidence>
<gene>
    <name evidence="1" type="primary">alaS</name>
    <name type="ordered locus">Tery_4806</name>
</gene>
<sequence>MSAKKLTGNEIRKKFLSFYAQREHTILPSASLVPEDPTVLLTIAGMLPFKPIFLGQQPRQYPRATTSQKCIRTNDIENVGRTARHHTFFEMLGNFSFGDYFKPEAIALAWELSTKIFALPPERLVVSVFREDDEAFAIWRDQIGIPAHRIQRMDEADNFWASGPTGPCGPCSEIYYDFHPELGDDHIDLEDDTRFIEFYNLVFMQYNRDANGNLTPLENRNIDTGMGLERMAQILQKVPNNYETDLIFPIIKTASDIADIDYRKSDDKTKVSLKVIGDHVRAVANLIADGVTASNVGRGYILRRLIRRVVRHGRLIGISGEFTSKVAETAITLAEDIYPNLRERETVIKAELQREESRFLETLERGEKLLAEIMAKPETKKTQHISGEDAFKLYDTYGFPLELTQEIAEENGLTVDVSMFDQEMKLAQIRSQSAHETIDLTAQDGVKLDIDKTQFLGYTDLSSPAQVMALVGDGEQLETVQAGAQVQIVLDKTPFYAESGGQIADRGYLSGDSLVVRIEDVQKQNNIFVHFGRIERGRLQLGMTVNAQIDGTCRRRAQANHTATHLLQAALRSLVDSSISQAGSLVSFDRLRFDFNCPRGLKPEEVEQVEAQVNSWIAEAHSATVAEMPLEVAKAKGAVAMFGEKYADVVRVVDYPGVSMELCGGTHVNNTAEIGVFKIISEAGISSGVRRIEAVAGLAVLDYLKVRDAVVKELSDRFKAKPEELSERVSNLQQELKDSQKQLEALKGELAVAKSDQLLGNAETVGEFQILVAEMPGVDAEALKTAAERLQQKLDESAVVLGSAAEGKVSLVAAFSKSVNGKGLQAGKFIGGIAKICGGGGGGRPNLAQAGGRDPSKLKEALESAKEQLVDGLK</sequence>